<organism>
    <name type="scientific">Staphylococcus aureus (strain NCTC 8325 / PS 47)</name>
    <dbReference type="NCBI Taxonomy" id="93061"/>
    <lineage>
        <taxon>Bacteria</taxon>
        <taxon>Bacillati</taxon>
        <taxon>Bacillota</taxon>
        <taxon>Bacilli</taxon>
        <taxon>Bacillales</taxon>
        <taxon>Staphylococcaceae</taxon>
        <taxon>Staphylococcus</taxon>
    </lineage>
</organism>
<gene>
    <name type="primary">icaB</name>
    <name type="ordered locus">SAOUHSC_03004</name>
</gene>
<feature type="signal peptide" evidence="2">
    <location>
        <begin position="1"/>
        <end position="28"/>
    </location>
</feature>
<feature type="chain" id="PRO_0000024833" description="Poly-beta-1,6-N-acetyl-D-glucosamine N-deacetylase">
    <location>
        <begin position="29"/>
        <end position="290"/>
    </location>
</feature>
<feature type="domain" description="NodB homology" evidence="3">
    <location>
        <begin position="114"/>
        <end position="290"/>
    </location>
</feature>
<feature type="sequence conflict" description="In Ref. 1; AAD52057." evidence="5" ref="1">
    <original>V</original>
    <variation>E</variation>
    <location>
        <position position="116"/>
    </location>
</feature>
<feature type="sequence conflict" description="In Ref. 1; AAD52057." evidence="5" ref="1">
    <original>I</original>
    <variation>V</variation>
    <location>
        <position position="118"/>
    </location>
</feature>
<feature type="sequence conflict" description="In Ref. 1; AAD52057." evidence="5" ref="1">
    <original>E</original>
    <variation>G</variation>
    <location>
        <position position="153"/>
    </location>
</feature>
<accession>Q9RQP7</accession>
<accession>Q2FUU7</accession>
<comment type="function">
    <text evidence="1">Catalyzes the N-deacetylation of poly-beta-1,6-N-acetyl-D-glucosamine (PNAG, also referred to as PIA), a biofilm adhesin polysaccharide. N-deacetylation is crucial for attachment of the polysaccharide to the bacterial cell surface; it leads to the introduction of positive charges in the otherwise neutral PIA polymer, allowing electrostatic interactions (By similarity).</text>
</comment>
<comment type="subcellular location">
    <subcellularLocation>
        <location>Secreted</location>
        <location>Cell wall</location>
    </subcellularLocation>
    <text evidence="1">Attached to the cell surface.</text>
</comment>
<comment type="disruption phenotype">
    <text evidence="4">Deletion of the icaADBCR genes leads to the inability to form biofilms, produce PIA or mediate N-acetylglucosaminyltransferase activity in vitro.</text>
</comment>
<comment type="similarity">
    <text evidence="5">Belongs to the polysaccharide deacetylase family.</text>
</comment>
<evidence type="ECO:0000250" key="1"/>
<evidence type="ECO:0000255" key="2"/>
<evidence type="ECO:0000255" key="3">
    <source>
        <dbReference type="PROSITE-ProRule" id="PRU01014"/>
    </source>
</evidence>
<evidence type="ECO:0000269" key="4">
    <source>
    </source>
</evidence>
<evidence type="ECO:0000305" key="5"/>
<proteinExistence type="inferred from homology"/>
<dbReference type="EC" id="3.5.1.-"/>
<dbReference type="EMBL" id="AF086783">
    <property type="protein sequence ID" value="AAD52057.1"/>
    <property type="molecule type" value="Genomic_DNA"/>
</dbReference>
<dbReference type="EMBL" id="CP000253">
    <property type="protein sequence ID" value="ABD31991.1"/>
    <property type="molecule type" value="Genomic_DNA"/>
</dbReference>
<dbReference type="RefSeq" id="WP_000877317.1">
    <property type="nucleotide sequence ID" value="NZ_LS483365.1"/>
</dbReference>
<dbReference type="RefSeq" id="YP_501453.1">
    <property type="nucleotide sequence ID" value="NC_007795.1"/>
</dbReference>
<dbReference type="SMR" id="Q9RQP7"/>
<dbReference type="STRING" id="93061.SAOUHSC_03004"/>
<dbReference type="PaxDb" id="1280-SAXN108_2940"/>
<dbReference type="GeneID" id="3921486"/>
<dbReference type="KEGG" id="sao:SAOUHSC_03004"/>
<dbReference type="PATRIC" id="fig|93061.5.peg.2711"/>
<dbReference type="eggNOG" id="COG0726">
    <property type="taxonomic scope" value="Bacteria"/>
</dbReference>
<dbReference type="HOGENOM" id="CLU_030024_3_2_9"/>
<dbReference type="OrthoDB" id="9778320at2"/>
<dbReference type="PHI-base" id="PHI:9884"/>
<dbReference type="PRO" id="PR:Q9RQP7"/>
<dbReference type="Proteomes" id="UP000008816">
    <property type="component" value="Chromosome"/>
</dbReference>
<dbReference type="GO" id="GO:0005576">
    <property type="term" value="C:extracellular region"/>
    <property type="evidence" value="ECO:0007669"/>
    <property type="project" value="UniProtKB-KW"/>
</dbReference>
<dbReference type="GO" id="GO:0016787">
    <property type="term" value="F:hydrolase activity"/>
    <property type="evidence" value="ECO:0000318"/>
    <property type="project" value="GO_Central"/>
</dbReference>
<dbReference type="GO" id="GO:0016811">
    <property type="term" value="F:hydrolase activity, acting on carbon-nitrogen (but not peptide) bonds, in linear amides"/>
    <property type="evidence" value="ECO:0007669"/>
    <property type="project" value="InterPro"/>
</dbReference>
<dbReference type="GO" id="GO:0005975">
    <property type="term" value="P:carbohydrate metabolic process"/>
    <property type="evidence" value="ECO:0007669"/>
    <property type="project" value="InterPro"/>
</dbReference>
<dbReference type="Gene3D" id="3.20.20.370">
    <property type="entry name" value="Glycoside hydrolase/deacetylase"/>
    <property type="match status" value="1"/>
</dbReference>
<dbReference type="InterPro" id="IPR011330">
    <property type="entry name" value="Glyco_hydro/deAcase_b/a-brl"/>
</dbReference>
<dbReference type="InterPro" id="IPR002509">
    <property type="entry name" value="NODB_dom"/>
</dbReference>
<dbReference type="InterPro" id="IPR023872">
    <property type="entry name" value="PNAG_deacetylase"/>
</dbReference>
<dbReference type="InterPro" id="IPR051398">
    <property type="entry name" value="Polysacch_Deacetylase"/>
</dbReference>
<dbReference type="NCBIfam" id="TIGR03933">
    <property type="entry name" value="PIA_icaB"/>
    <property type="match status" value="1"/>
</dbReference>
<dbReference type="PANTHER" id="PTHR34216">
    <property type="match status" value="1"/>
</dbReference>
<dbReference type="PANTHER" id="PTHR34216:SF3">
    <property type="entry name" value="POLY-BETA-1,6-N-ACETYL-D-GLUCOSAMINE N-DEACETYLASE"/>
    <property type="match status" value="1"/>
</dbReference>
<dbReference type="Pfam" id="PF01522">
    <property type="entry name" value="Polysacc_deac_1"/>
    <property type="match status" value="1"/>
</dbReference>
<dbReference type="SUPFAM" id="SSF88713">
    <property type="entry name" value="Glycoside hydrolase/deacetylase"/>
    <property type="match status" value="1"/>
</dbReference>
<dbReference type="PROSITE" id="PS51677">
    <property type="entry name" value="NODB"/>
    <property type="match status" value="1"/>
</dbReference>
<keyword id="KW-0134">Cell wall</keyword>
<keyword id="KW-0378">Hydrolase</keyword>
<keyword id="KW-1185">Reference proteome</keyword>
<keyword id="KW-0964">Secreted</keyword>
<keyword id="KW-0732">Signal</keyword>
<name>ICAB_STAA8</name>
<reference key="1">
    <citation type="journal article" date="1999" name="Infect. Immun.">
        <title>The intercellular adhesion (ica) locus is present in Staphylococcus aureus and is required for biofilm formation.</title>
        <authorList>
            <person name="Cramton S.E."/>
            <person name="Gerke C."/>
            <person name="Schnell N.F."/>
            <person name="Nichols W.W."/>
            <person name="Goetz F."/>
        </authorList>
    </citation>
    <scope>NUCLEOTIDE SEQUENCE [GENOMIC DNA]</scope>
    <scope>ROLE IN BIOFILM FORMATION</scope>
    <scope>DISRUPTION PHENOTYPE</scope>
</reference>
<reference key="2">
    <citation type="book" date="2006" name="Gram positive pathogens, 2nd edition">
        <title>The Staphylococcus aureus NCTC 8325 genome.</title>
        <editorList>
            <person name="Fischetti V."/>
            <person name="Novick R."/>
            <person name="Ferretti J."/>
            <person name="Portnoy D."/>
            <person name="Rood J."/>
        </editorList>
        <authorList>
            <person name="Gillaspy A.F."/>
            <person name="Worrell V."/>
            <person name="Orvis J."/>
            <person name="Roe B.A."/>
            <person name="Dyer D.W."/>
            <person name="Iandolo J.J."/>
        </authorList>
    </citation>
    <scope>NUCLEOTIDE SEQUENCE [LARGE SCALE GENOMIC DNA]</scope>
    <source>
        <strain>NCTC 8325 / PS 47</strain>
    </source>
</reference>
<protein>
    <recommendedName>
        <fullName>Poly-beta-1,6-N-acetyl-D-glucosamine N-deacetylase</fullName>
        <shortName>PNAG N-deacetylase</shortName>
        <shortName>Poly-beta-1,6-GlcNAc N-deacetylase</shortName>
        <ecNumber>3.5.1.-</ecNumber>
    </recommendedName>
    <alternativeName>
        <fullName>Biofilm polysaccharide intercellular adhesin deacetylase</fullName>
        <shortName>Biofilm PIA deacetylase</shortName>
    </alternativeName>
    <alternativeName>
        <fullName>Intercellular adhesion protein B</fullName>
    </alternativeName>
</protein>
<sequence>MKYRKFIILVLSILIILPVSTLDGHHIANADDDSPKKLKYKENSALALNYHRVRKANFLNNFIYFFSSSKEIKNYSVSQSQFESQIKWLKSHDAKFLTLKEFLYYKKKGKFPKRSVWINFDDMDETIYENAYPILKKYKIPATGFIITGHVGEENFHNLDMISKKELKEMYKTGLWEFETHTHDLHNLSKNNKSKLMKASEATIIKDLNKSEKYLTKNFKKSQKTIAYPYGLMNDDKLPVIKKAGLKYGFSLEEKAVTPNSNDYYIPRILISDDAFEHLIKRWDGFHEKD</sequence>